<organism>
    <name type="scientific">Dictyostelium discoideum</name>
    <name type="common">Social amoeba</name>
    <dbReference type="NCBI Taxonomy" id="44689"/>
    <lineage>
        <taxon>Eukaryota</taxon>
        <taxon>Amoebozoa</taxon>
        <taxon>Evosea</taxon>
        <taxon>Eumycetozoa</taxon>
        <taxon>Dictyostelia</taxon>
        <taxon>Dictyosteliales</taxon>
        <taxon>Dictyosteliaceae</taxon>
        <taxon>Dictyostelium</taxon>
    </lineage>
</organism>
<evidence type="ECO:0000255" key="1">
    <source>
        <dbReference type="PROSITE-ProRule" id="PRU00541"/>
    </source>
</evidence>
<evidence type="ECO:0000255" key="2">
    <source>
        <dbReference type="PROSITE-ProRule" id="PRU00542"/>
    </source>
</evidence>
<evidence type="ECO:0000256" key="3">
    <source>
        <dbReference type="SAM" id="MobiDB-lite"/>
    </source>
</evidence>
<evidence type="ECO:0000269" key="4">
    <source>
    </source>
</evidence>
<evidence type="ECO:0000305" key="5"/>
<protein>
    <recommendedName>
        <fullName>ATP-dependent RNA helicase ddx19</fullName>
        <ecNumber>3.6.4.13</ecNumber>
    </recommendedName>
    <alternativeName>
        <fullName>ATP-dependent RNA helicase helC</fullName>
    </alternativeName>
    <alternativeName>
        <fullName>DEAD box protein 19</fullName>
    </alternativeName>
</protein>
<dbReference type="EC" id="3.6.4.13"/>
<dbReference type="EMBL" id="AF002677">
    <property type="protein sequence ID" value="AAB60938.1"/>
    <property type="status" value="ALT_FRAME"/>
    <property type="molecule type" value="mRNA"/>
</dbReference>
<dbReference type="EMBL" id="AAFI02000042">
    <property type="protein sequence ID" value="EAL66538.1"/>
    <property type="molecule type" value="Genomic_DNA"/>
</dbReference>
<dbReference type="RefSeq" id="XP_640633.1">
    <property type="nucleotide sequence ID" value="XM_635541.1"/>
</dbReference>
<dbReference type="SMR" id="Q54TF8"/>
<dbReference type="FunCoup" id="Q54TF8">
    <property type="interactions" value="918"/>
</dbReference>
<dbReference type="STRING" id="44689.Q54TF8"/>
<dbReference type="PaxDb" id="44689-DDB0215338"/>
<dbReference type="EnsemblProtists" id="EAL66538">
    <property type="protein sequence ID" value="EAL66538"/>
    <property type="gene ID" value="DDB_G0281553"/>
</dbReference>
<dbReference type="GeneID" id="8623244"/>
<dbReference type="KEGG" id="ddi:DDB_G0281553"/>
<dbReference type="dictyBase" id="DDB_G0281553">
    <property type="gene designation" value="helC"/>
</dbReference>
<dbReference type="VEuPathDB" id="AmoebaDB:DDB_G0281553"/>
<dbReference type="eggNOG" id="KOG0332">
    <property type="taxonomic scope" value="Eukaryota"/>
</dbReference>
<dbReference type="HOGENOM" id="CLU_003041_1_0_1"/>
<dbReference type="InParanoid" id="Q54TF8"/>
<dbReference type="OMA" id="DFKNLCM"/>
<dbReference type="PhylomeDB" id="Q54TF8"/>
<dbReference type="PRO" id="PR:Q54TF8"/>
<dbReference type="Proteomes" id="UP000002195">
    <property type="component" value="Chromosome 3"/>
</dbReference>
<dbReference type="GO" id="GO:0010494">
    <property type="term" value="C:cytoplasmic stress granule"/>
    <property type="evidence" value="ECO:0000318"/>
    <property type="project" value="GO_Central"/>
</dbReference>
<dbReference type="GO" id="GO:0005634">
    <property type="term" value="C:nucleus"/>
    <property type="evidence" value="ECO:0000318"/>
    <property type="project" value="GO_Central"/>
</dbReference>
<dbReference type="GO" id="GO:0005524">
    <property type="term" value="F:ATP binding"/>
    <property type="evidence" value="ECO:0007669"/>
    <property type="project" value="UniProtKB-KW"/>
</dbReference>
<dbReference type="GO" id="GO:0016887">
    <property type="term" value="F:ATP hydrolysis activity"/>
    <property type="evidence" value="ECO:0007669"/>
    <property type="project" value="RHEA"/>
</dbReference>
<dbReference type="GO" id="GO:0003729">
    <property type="term" value="F:mRNA binding"/>
    <property type="evidence" value="ECO:0000318"/>
    <property type="project" value="GO_Central"/>
</dbReference>
<dbReference type="GO" id="GO:0003724">
    <property type="term" value="F:RNA helicase activity"/>
    <property type="evidence" value="ECO:0000318"/>
    <property type="project" value="GO_Central"/>
</dbReference>
<dbReference type="GO" id="GO:0016973">
    <property type="term" value="P:poly(A)+ mRNA export from nucleus"/>
    <property type="evidence" value="ECO:0000318"/>
    <property type="project" value="GO_Central"/>
</dbReference>
<dbReference type="GO" id="GO:0010628">
    <property type="term" value="P:positive regulation of gene expression"/>
    <property type="evidence" value="ECO:0000315"/>
    <property type="project" value="dictyBase"/>
</dbReference>
<dbReference type="GO" id="GO:0030587">
    <property type="term" value="P:sorocarp development"/>
    <property type="evidence" value="ECO:0000315"/>
    <property type="project" value="dictyBase"/>
</dbReference>
<dbReference type="CDD" id="cd17963">
    <property type="entry name" value="DEADc_DDX19_DDX25"/>
    <property type="match status" value="1"/>
</dbReference>
<dbReference type="CDD" id="cd18787">
    <property type="entry name" value="SF2_C_DEAD"/>
    <property type="match status" value="1"/>
</dbReference>
<dbReference type="FunFam" id="3.40.50.300:FF:000849">
    <property type="entry name" value="ATP-dependent RNA helicase DBP5"/>
    <property type="match status" value="1"/>
</dbReference>
<dbReference type="Gene3D" id="3.40.50.300">
    <property type="entry name" value="P-loop containing nucleotide triphosphate hydrolases"/>
    <property type="match status" value="2"/>
</dbReference>
<dbReference type="InterPro" id="IPR011545">
    <property type="entry name" value="DEAD/DEAH_box_helicase_dom"/>
</dbReference>
<dbReference type="InterPro" id="IPR014001">
    <property type="entry name" value="Helicase_ATP-bd"/>
</dbReference>
<dbReference type="InterPro" id="IPR001650">
    <property type="entry name" value="Helicase_C-like"/>
</dbReference>
<dbReference type="InterPro" id="IPR027417">
    <property type="entry name" value="P-loop_NTPase"/>
</dbReference>
<dbReference type="InterPro" id="IPR014014">
    <property type="entry name" value="RNA_helicase_DEAD_Q_motif"/>
</dbReference>
<dbReference type="PANTHER" id="PTHR47958">
    <property type="entry name" value="ATP-DEPENDENT RNA HELICASE DBP3"/>
    <property type="match status" value="1"/>
</dbReference>
<dbReference type="Pfam" id="PF00270">
    <property type="entry name" value="DEAD"/>
    <property type="match status" value="1"/>
</dbReference>
<dbReference type="Pfam" id="PF00271">
    <property type="entry name" value="Helicase_C"/>
    <property type="match status" value="1"/>
</dbReference>
<dbReference type="SMART" id="SM00487">
    <property type="entry name" value="DEXDc"/>
    <property type="match status" value="1"/>
</dbReference>
<dbReference type="SMART" id="SM00490">
    <property type="entry name" value="HELICc"/>
    <property type="match status" value="1"/>
</dbReference>
<dbReference type="SUPFAM" id="SSF52540">
    <property type="entry name" value="P-loop containing nucleoside triphosphate hydrolases"/>
    <property type="match status" value="1"/>
</dbReference>
<dbReference type="PROSITE" id="PS51192">
    <property type="entry name" value="HELICASE_ATP_BIND_1"/>
    <property type="match status" value="1"/>
</dbReference>
<dbReference type="PROSITE" id="PS51194">
    <property type="entry name" value="HELICASE_CTER"/>
    <property type="match status" value="1"/>
</dbReference>
<dbReference type="PROSITE" id="PS51195">
    <property type="entry name" value="Q_MOTIF"/>
    <property type="match status" value="1"/>
</dbReference>
<sequence length="465" mass="51720">MSEKETNTTSTENKEKEKQEQTNTNSTTESTNNQVDEEYERPGRSEGLDEFGIQLDIQQSDPNSPLYSVKTFEELGLKPELLKGVYAMGYNKPSKIQEAALPIIIQSPNNLIAQSQSGTGKTAAFTLGMLNCVDPSINAPQAICISPTKELALQTFEVISKIGQFSNIKPLLYISEIEVPKNVTNQVIIGTPGKILENVIKKQLSVKFLKMVVLDEADFIVKMKNVPNQIAMINRLLPSNVKVCLFSATFSMGVEELIKKIVQDPYTSIRLKRQELSVEKIHQYFIDCGSEDNKALILSDIYGFISVGQSIVFVHTIATAKSVHQKMVDEGHSVSLLYGKDLTTEERFKQIKDFKDGKSKVLITTNVLARGIDIPQVSLVINYDVPLDEMGKPDPVHYLHRIGRVGRFGRSGVALSFVYDQQSTNKLMNISTHLGVPLKELKSSEIESLDGILKGIRNQLTPLNN</sequence>
<keyword id="KW-0067">ATP-binding</keyword>
<keyword id="KW-0217">Developmental protein</keyword>
<keyword id="KW-0347">Helicase</keyword>
<keyword id="KW-0378">Hydrolase</keyword>
<keyword id="KW-0547">Nucleotide-binding</keyword>
<keyword id="KW-1185">Reference proteome</keyword>
<keyword id="KW-0694">RNA-binding</keyword>
<accession>Q54TF8</accession>
<accession>O00898</accession>
<proteinExistence type="evidence at transcript level"/>
<reference key="1">
    <citation type="journal article" date="1998" name="Curr. Biol.">
        <title>The helC gene encodes a putative DEAD-box RNA helicase required for development in Dictyostelium discoideum.</title>
        <authorList>
            <person name="Machesky L.M."/>
            <person name="Insall R.H."/>
            <person name="Kay R.R."/>
        </authorList>
    </citation>
    <scope>NUCLEOTIDE SEQUENCE [MRNA]</scope>
    <scope>FUNCTION</scope>
    <source>
        <strain>AX3</strain>
    </source>
</reference>
<reference key="2">
    <citation type="journal article" date="2005" name="Nature">
        <title>The genome of the social amoeba Dictyostelium discoideum.</title>
        <authorList>
            <person name="Eichinger L."/>
            <person name="Pachebat J.A."/>
            <person name="Gloeckner G."/>
            <person name="Rajandream M.A."/>
            <person name="Sucgang R."/>
            <person name="Berriman M."/>
            <person name="Song J."/>
            <person name="Olsen R."/>
            <person name="Szafranski K."/>
            <person name="Xu Q."/>
            <person name="Tunggal B."/>
            <person name="Kummerfeld S."/>
            <person name="Madera M."/>
            <person name="Konfortov B.A."/>
            <person name="Rivero F."/>
            <person name="Bankier A.T."/>
            <person name="Lehmann R."/>
            <person name="Hamlin N."/>
            <person name="Davies R."/>
            <person name="Gaudet P."/>
            <person name="Fey P."/>
            <person name="Pilcher K."/>
            <person name="Chen G."/>
            <person name="Saunders D."/>
            <person name="Sodergren E.J."/>
            <person name="Davis P."/>
            <person name="Kerhornou A."/>
            <person name="Nie X."/>
            <person name="Hall N."/>
            <person name="Anjard C."/>
            <person name="Hemphill L."/>
            <person name="Bason N."/>
            <person name="Farbrother P."/>
            <person name="Desany B."/>
            <person name="Just E."/>
            <person name="Morio T."/>
            <person name="Rost R."/>
            <person name="Churcher C.M."/>
            <person name="Cooper J."/>
            <person name="Haydock S."/>
            <person name="van Driessche N."/>
            <person name="Cronin A."/>
            <person name="Goodhead I."/>
            <person name="Muzny D.M."/>
            <person name="Mourier T."/>
            <person name="Pain A."/>
            <person name="Lu M."/>
            <person name="Harper D."/>
            <person name="Lindsay R."/>
            <person name="Hauser H."/>
            <person name="James K.D."/>
            <person name="Quiles M."/>
            <person name="Madan Babu M."/>
            <person name="Saito T."/>
            <person name="Buchrieser C."/>
            <person name="Wardroper A."/>
            <person name="Felder M."/>
            <person name="Thangavelu M."/>
            <person name="Johnson D."/>
            <person name="Knights A."/>
            <person name="Loulseged H."/>
            <person name="Mungall K.L."/>
            <person name="Oliver K."/>
            <person name="Price C."/>
            <person name="Quail M.A."/>
            <person name="Urushihara H."/>
            <person name="Hernandez J."/>
            <person name="Rabbinowitsch E."/>
            <person name="Steffen D."/>
            <person name="Sanders M."/>
            <person name="Ma J."/>
            <person name="Kohara Y."/>
            <person name="Sharp S."/>
            <person name="Simmonds M.N."/>
            <person name="Spiegler S."/>
            <person name="Tivey A."/>
            <person name="Sugano S."/>
            <person name="White B."/>
            <person name="Walker D."/>
            <person name="Woodward J.R."/>
            <person name="Winckler T."/>
            <person name="Tanaka Y."/>
            <person name="Shaulsky G."/>
            <person name="Schleicher M."/>
            <person name="Weinstock G.M."/>
            <person name="Rosenthal A."/>
            <person name="Cox E.C."/>
            <person name="Chisholm R.L."/>
            <person name="Gibbs R.A."/>
            <person name="Loomis W.F."/>
            <person name="Platzer M."/>
            <person name="Kay R.R."/>
            <person name="Williams J.G."/>
            <person name="Dear P.H."/>
            <person name="Noegel A.A."/>
            <person name="Barrell B.G."/>
            <person name="Kuspa A."/>
        </authorList>
    </citation>
    <scope>NUCLEOTIDE SEQUENCE [LARGE SCALE GENOMIC DNA]</scope>
    <source>
        <strain>AX4</strain>
    </source>
</reference>
<gene>
    <name type="primary">helC</name>
    <name type="synonym">ddx19</name>
    <name type="ORF">DDB_G0281553</name>
</gene>
<name>DDX19_DICDI</name>
<comment type="function">
    <text evidence="4">ATP-binding RNA helicase required for normal differentiation and development.</text>
</comment>
<comment type="catalytic activity">
    <reaction>
        <text>ATP + H2O = ADP + phosphate + H(+)</text>
        <dbReference type="Rhea" id="RHEA:13065"/>
        <dbReference type="ChEBI" id="CHEBI:15377"/>
        <dbReference type="ChEBI" id="CHEBI:15378"/>
        <dbReference type="ChEBI" id="CHEBI:30616"/>
        <dbReference type="ChEBI" id="CHEBI:43474"/>
        <dbReference type="ChEBI" id="CHEBI:456216"/>
        <dbReference type="EC" id="3.6.4.13"/>
    </reaction>
</comment>
<comment type="domain">
    <text>The Q motif is unique to and characteristic of the DEAD box family of RNA helicases and controls ATP binding and hydrolysis.</text>
</comment>
<comment type="similarity">
    <text evidence="5">Belongs to the DEAD box helicase family. DDX19/DBP5 subfamily.</text>
</comment>
<comment type="sequence caution" evidence="5">
    <conflict type="frameshift">
        <sequence resource="EMBL-CDS" id="AAB60938"/>
    </conflict>
</comment>
<feature type="chain" id="PRO_0000327407" description="ATP-dependent RNA helicase ddx19">
    <location>
        <begin position="1"/>
        <end position="465"/>
    </location>
</feature>
<feature type="domain" description="Helicase ATP-binding" evidence="1">
    <location>
        <begin position="102"/>
        <end position="268"/>
    </location>
</feature>
<feature type="domain" description="Helicase C-terminal" evidence="2">
    <location>
        <begin position="297"/>
        <end position="449"/>
    </location>
</feature>
<feature type="region of interest" description="Disordered" evidence="3">
    <location>
        <begin position="1"/>
        <end position="45"/>
    </location>
</feature>
<feature type="short sequence motif" description="Q motif">
    <location>
        <begin position="70"/>
        <end position="98"/>
    </location>
</feature>
<feature type="short sequence motif" description="DEAD box">
    <location>
        <begin position="215"/>
        <end position="218"/>
    </location>
</feature>
<feature type="compositionally biased region" description="Basic and acidic residues" evidence="3">
    <location>
        <begin position="1"/>
        <end position="20"/>
    </location>
</feature>
<feature type="compositionally biased region" description="Low complexity" evidence="3">
    <location>
        <begin position="21"/>
        <end position="34"/>
    </location>
</feature>
<feature type="binding site" evidence="1">
    <location>
        <begin position="115"/>
        <end position="122"/>
    </location>
    <ligand>
        <name>ATP</name>
        <dbReference type="ChEBI" id="CHEBI:30616"/>
    </ligand>
</feature>
<feature type="sequence conflict" description="In Ref. 1; AAB60938." evidence="5" ref="1">
    <original>GI</original>
    <variation>EF</variation>
    <location>
        <begin position="52"/>
        <end position="53"/>
    </location>
</feature>
<feature type="sequence conflict" description="In Ref. 1; AAB60938." evidence="5" ref="1">
    <original>V</original>
    <variation>W</variation>
    <location>
        <position position="69"/>
    </location>
</feature>
<feature type="sequence conflict" description="In Ref. 1; AAB60938." evidence="5" ref="1">
    <original>A</original>
    <variation>T</variation>
    <location>
        <position position="100"/>
    </location>
</feature>